<feature type="chain" id="PRO_0000209426" description="Co-chaperone protein DjlA">
    <location>
        <begin position="1"/>
        <end position="271"/>
    </location>
</feature>
<feature type="topological domain" description="Periplasmic" evidence="1">
    <location>
        <begin position="1"/>
        <end position="6"/>
    </location>
</feature>
<feature type="transmembrane region" description="Helical" evidence="1">
    <location>
        <begin position="7"/>
        <end position="31"/>
    </location>
</feature>
<feature type="topological domain" description="Cytoplasmic" evidence="1">
    <location>
        <begin position="32"/>
        <end position="271"/>
    </location>
</feature>
<feature type="domain" description="J" evidence="1">
    <location>
        <begin position="205"/>
        <end position="271"/>
    </location>
</feature>
<reference key="1">
    <citation type="journal article" date="2002" name="Proc. Natl. Acad. Sci. U.S.A.">
        <title>Extensive mosaic structure revealed by the complete genome sequence of uropathogenic Escherichia coli.</title>
        <authorList>
            <person name="Welch R.A."/>
            <person name="Burland V."/>
            <person name="Plunkett G. III"/>
            <person name="Redford P."/>
            <person name="Roesch P."/>
            <person name="Rasko D."/>
            <person name="Buckles E.L."/>
            <person name="Liou S.-R."/>
            <person name="Boutin A."/>
            <person name="Hackett J."/>
            <person name="Stroud D."/>
            <person name="Mayhew G.F."/>
            <person name="Rose D.J."/>
            <person name="Zhou S."/>
            <person name="Schwartz D.C."/>
            <person name="Perna N.T."/>
            <person name="Mobley H.L.T."/>
            <person name="Donnenberg M.S."/>
            <person name="Blattner F.R."/>
        </authorList>
    </citation>
    <scope>NUCLEOTIDE SEQUENCE [LARGE SCALE GENOMIC DNA]</scope>
    <source>
        <strain>CFT073 / ATCC 700928 / UPEC</strain>
    </source>
</reference>
<protein>
    <recommendedName>
        <fullName evidence="1">Co-chaperone protein DjlA</fullName>
    </recommendedName>
</protein>
<proteinExistence type="inferred from homology"/>
<evidence type="ECO:0000255" key="1">
    <source>
        <dbReference type="HAMAP-Rule" id="MF_01153"/>
    </source>
</evidence>
<evidence type="ECO:0000305" key="2"/>
<gene>
    <name evidence="1" type="primary">djlA</name>
    <name type="synonym">yabH</name>
    <name type="ordered locus">c0068</name>
</gene>
<dbReference type="EMBL" id="AE014075">
    <property type="protein sequence ID" value="AAN78564.1"/>
    <property type="status" value="ALT_INIT"/>
    <property type="molecule type" value="Genomic_DNA"/>
</dbReference>
<dbReference type="RefSeq" id="WP_001200560.1">
    <property type="nucleotide sequence ID" value="NZ_CP051263.1"/>
</dbReference>
<dbReference type="SMR" id="Q8FL94"/>
<dbReference type="STRING" id="199310.c0068"/>
<dbReference type="KEGG" id="ecc:c0068"/>
<dbReference type="eggNOG" id="COG1076">
    <property type="taxonomic scope" value="Bacteria"/>
</dbReference>
<dbReference type="HOGENOM" id="CLU_066221_1_0_6"/>
<dbReference type="Proteomes" id="UP000001410">
    <property type="component" value="Chromosome"/>
</dbReference>
<dbReference type="GO" id="GO:0005886">
    <property type="term" value="C:plasma membrane"/>
    <property type="evidence" value="ECO:0007669"/>
    <property type="project" value="UniProtKB-SubCell"/>
</dbReference>
<dbReference type="GO" id="GO:0051087">
    <property type="term" value="F:protein-folding chaperone binding"/>
    <property type="evidence" value="ECO:0007669"/>
    <property type="project" value="InterPro"/>
</dbReference>
<dbReference type="CDD" id="cd06257">
    <property type="entry name" value="DnaJ"/>
    <property type="match status" value="1"/>
</dbReference>
<dbReference type="CDD" id="cd07316">
    <property type="entry name" value="terB_like_DjlA"/>
    <property type="match status" value="1"/>
</dbReference>
<dbReference type="FunFam" id="1.10.287.110:FF:000011">
    <property type="entry name" value="Co-chaperone protein DjlA"/>
    <property type="match status" value="1"/>
</dbReference>
<dbReference type="FunFam" id="1.10.3680.10:FF:000001">
    <property type="entry name" value="Co-chaperone protein DjlA"/>
    <property type="match status" value="1"/>
</dbReference>
<dbReference type="Gene3D" id="1.10.287.110">
    <property type="entry name" value="DnaJ domain"/>
    <property type="match status" value="1"/>
</dbReference>
<dbReference type="Gene3D" id="1.10.3680.10">
    <property type="entry name" value="TerB-like"/>
    <property type="match status" value="1"/>
</dbReference>
<dbReference type="HAMAP" id="MF_01153">
    <property type="entry name" value="DjlA"/>
    <property type="match status" value="1"/>
</dbReference>
<dbReference type="InterPro" id="IPR023749">
    <property type="entry name" value="DjlA"/>
</dbReference>
<dbReference type="InterPro" id="IPR050817">
    <property type="entry name" value="DjlA_DnaK_co-chaperone"/>
</dbReference>
<dbReference type="InterPro" id="IPR007791">
    <property type="entry name" value="DjlA_N"/>
</dbReference>
<dbReference type="InterPro" id="IPR001623">
    <property type="entry name" value="DnaJ_domain"/>
</dbReference>
<dbReference type="InterPro" id="IPR036869">
    <property type="entry name" value="J_dom_sf"/>
</dbReference>
<dbReference type="InterPro" id="IPR029024">
    <property type="entry name" value="TerB-like"/>
</dbReference>
<dbReference type="NCBIfam" id="NF006948">
    <property type="entry name" value="PRK09430.1"/>
    <property type="match status" value="1"/>
</dbReference>
<dbReference type="PANTHER" id="PTHR24074">
    <property type="entry name" value="CO-CHAPERONE PROTEIN DJLA"/>
    <property type="match status" value="1"/>
</dbReference>
<dbReference type="Pfam" id="PF00226">
    <property type="entry name" value="DnaJ"/>
    <property type="match status" value="1"/>
</dbReference>
<dbReference type="Pfam" id="PF05099">
    <property type="entry name" value="TerB"/>
    <property type="match status" value="1"/>
</dbReference>
<dbReference type="PRINTS" id="PR00625">
    <property type="entry name" value="JDOMAIN"/>
</dbReference>
<dbReference type="SMART" id="SM00271">
    <property type="entry name" value="DnaJ"/>
    <property type="match status" value="1"/>
</dbReference>
<dbReference type="SUPFAM" id="SSF46565">
    <property type="entry name" value="Chaperone J-domain"/>
    <property type="match status" value="1"/>
</dbReference>
<dbReference type="PROSITE" id="PS50076">
    <property type="entry name" value="DNAJ_2"/>
    <property type="match status" value="1"/>
</dbReference>
<name>DJLA_ECOL6</name>
<accession>Q8FL94</accession>
<comment type="function">
    <text evidence="1">Regulatory DnaK co-chaperone. Direct interaction between DnaK and DjlA is needed for the induction of the wcaABCDE operon, involved in the synthesis of a colanic acid polysaccharide capsule, possibly through activation of the RcsB/RcsC phosphotransfer signaling pathway. The colanic acid capsule may help the bacterium survive conditions outside the host.</text>
</comment>
<comment type="subunit">
    <text evidence="1">Homodimer.</text>
</comment>
<comment type="subcellular location">
    <subcellularLocation>
        <location evidence="1">Cell inner membrane</location>
        <topology evidence="1">Single-pass type III membrane protein</topology>
    </subcellularLocation>
</comment>
<comment type="domain">
    <text evidence="1">The transmembrane domain is a dimerization domain.</text>
</comment>
<comment type="sequence caution" evidence="2">
    <conflict type="erroneous initiation">
        <sequence resource="EMBL-CDS" id="AAN78564"/>
    </conflict>
</comment>
<keyword id="KW-0997">Cell inner membrane</keyword>
<keyword id="KW-1003">Cell membrane</keyword>
<keyword id="KW-0143">Chaperone</keyword>
<keyword id="KW-0472">Membrane</keyword>
<keyword id="KW-1185">Reference proteome</keyword>
<keyword id="KW-0812">Transmembrane</keyword>
<keyword id="KW-1133">Transmembrane helix</keyword>
<sequence>MQYWGKIIGVAVALIMGGGFWGVVLGLLIGHMFDKARSRKMAWFANQRERQALFFATTFEVMGHLTKSKGRVTEADIHIASQLMDRMNLHGASRTAAQNAFRVGKSDNYPLREKMRQFRSVCFGRFDLIRMFLEIQIQAAFADGSLHPNERAVLYVIAEELGISRAQFDQFLRMMQGGAQFGGGYQQQSGGGNWQQAQRGPTLEDACNVLGVKPTDDATTIKRAYRKLMSEHHPDKLVAKGLPPEMMEMAKQKAQEIQQAYELIKQQKGFK</sequence>
<organism>
    <name type="scientific">Escherichia coli O6:H1 (strain CFT073 / ATCC 700928 / UPEC)</name>
    <dbReference type="NCBI Taxonomy" id="199310"/>
    <lineage>
        <taxon>Bacteria</taxon>
        <taxon>Pseudomonadati</taxon>
        <taxon>Pseudomonadota</taxon>
        <taxon>Gammaproteobacteria</taxon>
        <taxon>Enterobacterales</taxon>
        <taxon>Enterobacteriaceae</taxon>
        <taxon>Escherichia</taxon>
    </lineage>
</organism>